<proteinExistence type="inferred from homology"/>
<keyword id="KW-0488">Methylation</keyword>
<keyword id="KW-0687">Ribonucleoprotein</keyword>
<keyword id="KW-0689">Ribosomal protein</keyword>
<keyword id="KW-0694">RNA-binding</keyword>
<keyword id="KW-0699">rRNA-binding</keyword>
<organism>
    <name type="scientific">Mycobacterium ulcerans (strain Agy99)</name>
    <dbReference type="NCBI Taxonomy" id="362242"/>
    <lineage>
        <taxon>Bacteria</taxon>
        <taxon>Bacillati</taxon>
        <taxon>Actinomycetota</taxon>
        <taxon>Actinomycetes</taxon>
        <taxon>Mycobacteriales</taxon>
        <taxon>Mycobacteriaceae</taxon>
        <taxon>Mycobacterium</taxon>
        <taxon>Mycobacterium ulcerans group</taxon>
    </lineage>
</organism>
<evidence type="ECO:0000255" key="1">
    <source>
        <dbReference type="HAMAP-Rule" id="MF_00736"/>
    </source>
</evidence>
<evidence type="ECO:0000305" key="2"/>
<reference key="1">
    <citation type="journal article" date="2007" name="Genome Res.">
        <title>Reductive evolution and niche adaptation inferred from the genome of Mycobacterium ulcerans, the causative agent of Buruli ulcer.</title>
        <authorList>
            <person name="Stinear T.P."/>
            <person name="Seemann T."/>
            <person name="Pidot S."/>
            <person name="Frigui W."/>
            <person name="Reysset G."/>
            <person name="Garnier T."/>
            <person name="Meurice G."/>
            <person name="Simon D."/>
            <person name="Bouchier C."/>
            <person name="Ma L."/>
            <person name="Tichit M."/>
            <person name="Porter J.L."/>
            <person name="Ryan J."/>
            <person name="Johnson P.D.R."/>
            <person name="Davies J.K."/>
            <person name="Jenkin G.A."/>
            <person name="Small P.L.C."/>
            <person name="Jones L.M."/>
            <person name="Tekaia F."/>
            <person name="Laval F."/>
            <person name="Daffe M."/>
            <person name="Parkhill J."/>
            <person name="Cole S.T."/>
        </authorList>
    </citation>
    <scope>NUCLEOTIDE SEQUENCE [LARGE SCALE GENOMIC DNA]</scope>
    <source>
        <strain>Agy99</strain>
    </source>
</reference>
<comment type="function">
    <text evidence="1">Forms part of the ribosomal stalk which helps the ribosome interact with GTP-bound translation factors.</text>
</comment>
<comment type="subunit">
    <text evidence="1">Part of the ribosomal stalk of the 50S ribosomal subunit. Interacts with L10 and the large rRNA to form the base of the stalk. L10 forms an elongated spine to which L12 dimers bind in a sequential fashion forming a multimeric L10(L12)X complex.</text>
</comment>
<comment type="PTM">
    <text evidence="1">One or more lysine residues are methylated.</text>
</comment>
<comment type="similarity">
    <text evidence="1">Belongs to the universal ribosomal protein uL11 family.</text>
</comment>
<gene>
    <name evidence="1" type="primary">rplK</name>
    <name type="ordered locus">MUL_0726</name>
</gene>
<accession>A0PM07</accession>
<feature type="chain" id="PRO_1000046225" description="Large ribosomal subunit protein uL11">
    <location>
        <begin position="1"/>
        <end position="142"/>
    </location>
</feature>
<sequence length="142" mass="14947">MAPKKKVAGLIKLQIVAGQANPAPPVGPALGQHGVNIMEFCKAYNAATESQRGTVIPVEITVYEDRSFTFALKTPPAAKLLLKAAGVAKGSAEPHKTKVAKVTWDQVREIAETKKTDLNANDIDAAAKIIAGTARSMGITVE</sequence>
<protein>
    <recommendedName>
        <fullName evidence="1">Large ribosomal subunit protein uL11</fullName>
    </recommendedName>
    <alternativeName>
        <fullName evidence="2">50S ribosomal protein L11</fullName>
    </alternativeName>
</protein>
<name>RL11_MYCUA</name>
<dbReference type="EMBL" id="CP000325">
    <property type="protein sequence ID" value="ABL03376.1"/>
    <property type="molecule type" value="Genomic_DNA"/>
</dbReference>
<dbReference type="RefSeq" id="WP_011739001.1">
    <property type="nucleotide sequence ID" value="NC_008611.1"/>
</dbReference>
<dbReference type="SMR" id="A0PM07"/>
<dbReference type="KEGG" id="mul:MUL_0726"/>
<dbReference type="eggNOG" id="COG0080">
    <property type="taxonomic scope" value="Bacteria"/>
</dbReference>
<dbReference type="HOGENOM" id="CLU_074237_2_1_11"/>
<dbReference type="Proteomes" id="UP000000765">
    <property type="component" value="Chromosome"/>
</dbReference>
<dbReference type="GO" id="GO:0022625">
    <property type="term" value="C:cytosolic large ribosomal subunit"/>
    <property type="evidence" value="ECO:0007669"/>
    <property type="project" value="TreeGrafter"/>
</dbReference>
<dbReference type="GO" id="GO:0070180">
    <property type="term" value="F:large ribosomal subunit rRNA binding"/>
    <property type="evidence" value="ECO:0007669"/>
    <property type="project" value="UniProtKB-UniRule"/>
</dbReference>
<dbReference type="GO" id="GO:0003735">
    <property type="term" value="F:structural constituent of ribosome"/>
    <property type="evidence" value="ECO:0007669"/>
    <property type="project" value="InterPro"/>
</dbReference>
<dbReference type="GO" id="GO:0006412">
    <property type="term" value="P:translation"/>
    <property type="evidence" value="ECO:0007669"/>
    <property type="project" value="UniProtKB-UniRule"/>
</dbReference>
<dbReference type="CDD" id="cd00349">
    <property type="entry name" value="Ribosomal_L11"/>
    <property type="match status" value="1"/>
</dbReference>
<dbReference type="FunFam" id="1.10.10.250:FF:000001">
    <property type="entry name" value="50S ribosomal protein L11"/>
    <property type="match status" value="1"/>
</dbReference>
<dbReference type="FunFam" id="3.30.1550.10:FF:000001">
    <property type="entry name" value="50S ribosomal protein L11"/>
    <property type="match status" value="1"/>
</dbReference>
<dbReference type="Gene3D" id="1.10.10.250">
    <property type="entry name" value="Ribosomal protein L11, C-terminal domain"/>
    <property type="match status" value="1"/>
</dbReference>
<dbReference type="Gene3D" id="3.30.1550.10">
    <property type="entry name" value="Ribosomal protein L11/L12, N-terminal domain"/>
    <property type="match status" value="1"/>
</dbReference>
<dbReference type="HAMAP" id="MF_00736">
    <property type="entry name" value="Ribosomal_uL11"/>
    <property type="match status" value="1"/>
</dbReference>
<dbReference type="InterPro" id="IPR000911">
    <property type="entry name" value="Ribosomal_uL11"/>
</dbReference>
<dbReference type="InterPro" id="IPR006519">
    <property type="entry name" value="Ribosomal_uL11_bac-typ"/>
</dbReference>
<dbReference type="InterPro" id="IPR020783">
    <property type="entry name" value="Ribosomal_uL11_C"/>
</dbReference>
<dbReference type="InterPro" id="IPR036769">
    <property type="entry name" value="Ribosomal_uL11_C_sf"/>
</dbReference>
<dbReference type="InterPro" id="IPR020785">
    <property type="entry name" value="Ribosomal_uL11_CS"/>
</dbReference>
<dbReference type="InterPro" id="IPR020784">
    <property type="entry name" value="Ribosomal_uL11_N"/>
</dbReference>
<dbReference type="InterPro" id="IPR036796">
    <property type="entry name" value="Ribosomal_uL11_N_sf"/>
</dbReference>
<dbReference type="NCBIfam" id="TIGR01632">
    <property type="entry name" value="L11_bact"/>
    <property type="match status" value="1"/>
</dbReference>
<dbReference type="PANTHER" id="PTHR11661">
    <property type="entry name" value="60S RIBOSOMAL PROTEIN L12"/>
    <property type="match status" value="1"/>
</dbReference>
<dbReference type="PANTHER" id="PTHR11661:SF1">
    <property type="entry name" value="LARGE RIBOSOMAL SUBUNIT PROTEIN UL11M"/>
    <property type="match status" value="1"/>
</dbReference>
<dbReference type="Pfam" id="PF00298">
    <property type="entry name" value="Ribosomal_L11"/>
    <property type="match status" value="1"/>
</dbReference>
<dbReference type="Pfam" id="PF03946">
    <property type="entry name" value="Ribosomal_L11_N"/>
    <property type="match status" value="1"/>
</dbReference>
<dbReference type="SMART" id="SM00649">
    <property type="entry name" value="RL11"/>
    <property type="match status" value="1"/>
</dbReference>
<dbReference type="SUPFAM" id="SSF54747">
    <property type="entry name" value="Ribosomal L11/L12e N-terminal domain"/>
    <property type="match status" value="1"/>
</dbReference>
<dbReference type="SUPFAM" id="SSF46906">
    <property type="entry name" value="Ribosomal protein L11, C-terminal domain"/>
    <property type="match status" value="1"/>
</dbReference>
<dbReference type="PROSITE" id="PS00359">
    <property type="entry name" value="RIBOSOMAL_L11"/>
    <property type="match status" value="1"/>
</dbReference>